<organism>
    <name type="scientific">Neisseria meningitidis serogroup A / serotype 4A (strain DSM 15465 / Z2491)</name>
    <dbReference type="NCBI Taxonomy" id="122587"/>
    <lineage>
        <taxon>Bacteria</taxon>
        <taxon>Pseudomonadati</taxon>
        <taxon>Pseudomonadota</taxon>
        <taxon>Betaproteobacteria</taxon>
        <taxon>Neisseriales</taxon>
        <taxon>Neisseriaceae</taxon>
        <taxon>Neisseria</taxon>
    </lineage>
</organism>
<name>RPIA_NEIMA</name>
<keyword id="KW-0413">Isomerase</keyword>
<feature type="chain" id="PRO_0000158438" description="Ribose-5-phosphate isomerase A">
    <location>
        <begin position="1"/>
        <end position="223"/>
    </location>
</feature>
<feature type="active site" description="Proton acceptor" evidence="1">
    <location>
        <position position="104"/>
    </location>
</feature>
<feature type="binding site" evidence="1">
    <location>
        <begin position="29"/>
        <end position="32"/>
    </location>
    <ligand>
        <name>substrate</name>
    </ligand>
</feature>
<feature type="binding site" evidence="1">
    <location>
        <begin position="82"/>
        <end position="85"/>
    </location>
    <ligand>
        <name>substrate</name>
    </ligand>
</feature>
<feature type="binding site" evidence="1">
    <location>
        <begin position="95"/>
        <end position="98"/>
    </location>
    <ligand>
        <name>substrate</name>
    </ligand>
</feature>
<feature type="binding site" evidence="1">
    <location>
        <position position="122"/>
    </location>
    <ligand>
        <name>substrate</name>
    </ligand>
</feature>
<reference key="1">
    <citation type="journal article" date="2000" name="Nature">
        <title>Complete DNA sequence of a serogroup A strain of Neisseria meningitidis Z2491.</title>
        <authorList>
            <person name="Parkhill J."/>
            <person name="Achtman M."/>
            <person name="James K.D."/>
            <person name="Bentley S.D."/>
            <person name="Churcher C.M."/>
            <person name="Klee S.R."/>
            <person name="Morelli G."/>
            <person name="Basham D."/>
            <person name="Brown D."/>
            <person name="Chillingworth T."/>
            <person name="Davies R.M."/>
            <person name="Davis P."/>
            <person name="Devlin K."/>
            <person name="Feltwell T."/>
            <person name="Hamlin N."/>
            <person name="Holroyd S."/>
            <person name="Jagels K."/>
            <person name="Leather S."/>
            <person name="Moule S."/>
            <person name="Mungall K.L."/>
            <person name="Quail M.A."/>
            <person name="Rajandream M.A."/>
            <person name="Rutherford K.M."/>
            <person name="Simmonds M."/>
            <person name="Skelton J."/>
            <person name="Whitehead S."/>
            <person name="Spratt B.G."/>
            <person name="Barrell B.G."/>
        </authorList>
    </citation>
    <scope>NUCLEOTIDE SEQUENCE [LARGE SCALE GENOMIC DNA]</scope>
    <source>
        <strain>DSM 15465 / Z2491</strain>
    </source>
</reference>
<proteinExistence type="inferred from homology"/>
<gene>
    <name evidence="1" type="primary">rpiA</name>
    <name type="ordered locus">NMA1711</name>
</gene>
<sequence length="223" mass="23920">MTTQDELKRIAAEKAVEFVPENEYIGIGTGSTINFFIEALGKSGKKIKGAVSTSKKSSELLAQYDIPVVSLNEVSGLAVYIDGADEVNHALQMIKGGGGAHLNEKIVASASEKFVCIADESKYVSRLGKFPLPVEVVESARSLVSRKLLAMGGQPELRIGYTTFYGNQIVDVHGLNIDQPLTMEDEINKITGVLENGIFARDAADVLILGTEEGAKVIYPCQG</sequence>
<comment type="function">
    <text evidence="1">Catalyzes the reversible conversion of ribose-5-phosphate to ribulose 5-phosphate.</text>
</comment>
<comment type="catalytic activity">
    <reaction evidence="1">
        <text>aldehydo-D-ribose 5-phosphate = D-ribulose 5-phosphate</text>
        <dbReference type="Rhea" id="RHEA:14657"/>
        <dbReference type="ChEBI" id="CHEBI:58121"/>
        <dbReference type="ChEBI" id="CHEBI:58273"/>
        <dbReference type="EC" id="5.3.1.6"/>
    </reaction>
</comment>
<comment type="pathway">
    <text evidence="1">Carbohydrate degradation; pentose phosphate pathway; D-ribose 5-phosphate from D-ribulose 5-phosphate (non-oxidative stage): step 1/1.</text>
</comment>
<comment type="subunit">
    <text evidence="1">Homodimer.</text>
</comment>
<comment type="similarity">
    <text evidence="1">Belongs to the ribose 5-phosphate isomerase family.</text>
</comment>
<dbReference type="EC" id="5.3.1.6" evidence="1"/>
<dbReference type="EMBL" id="AL157959">
    <property type="protein sequence ID" value="CAM08840.1"/>
    <property type="molecule type" value="Genomic_DNA"/>
</dbReference>
<dbReference type="PIR" id="B81867">
    <property type="entry name" value="B81867"/>
</dbReference>
<dbReference type="RefSeq" id="WP_002223576.1">
    <property type="nucleotide sequence ID" value="NC_003116.1"/>
</dbReference>
<dbReference type="SMR" id="Q9JTM5"/>
<dbReference type="EnsemblBacteria" id="CAM08840">
    <property type="protein sequence ID" value="CAM08840"/>
    <property type="gene ID" value="NMA1711"/>
</dbReference>
<dbReference type="GeneID" id="93387868"/>
<dbReference type="KEGG" id="nma:NMA1711"/>
<dbReference type="HOGENOM" id="CLU_056590_1_1_4"/>
<dbReference type="UniPathway" id="UPA00115">
    <property type="reaction ID" value="UER00412"/>
</dbReference>
<dbReference type="Proteomes" id="UP000000626">
    <property type="component" value="Chromosome"/>
</dbReference>
<dbReference type="GO" id="GO:0005829">
    <property type="term" value="C:cytosol"/>
    <property type="evidence" value="ECO:0007669"/>
    <property type="project" value="TreeGrafter"/>
</dbReference>
<dbReference type="GO" id="GO:0004751">
    <property type="term" value="F:ribose-5-phosphate isomerase activity"/>
    <property type="evidence" value="ECO:0007669"/>
    <property type="project" value="UniProtKB-UniRule"/>
</dbReference>
<dbReference type="GO" id="GO:0006014">
    <property type="term" value="P:D-ribose metabolic process"/>
    <property type="evidence" value="ECO:0007669"/>
    <property type="project" value="TreeGrafter"/>
</dbReference>
<dbReference type="GO" id="GO:0009052">
    <property type="term" value="P:pentose-phosphate shunt, non-oxidative branch"/>
    <property type="evidence" value="ECO:0007669"/>
    <property type="project" value="UniProtKB-UniRule"/>
</dbReference>
<dbReference type="CDD" id="cd01398">
    <property type="entry name" value="RPI_A"/>
    <property type="match status" value="1"/>
</dbReference>
<dbReference type="FunFam" id="3.40.50.1360:FF:000001">
    <property type="entry name" value="Ribose-5-phosphate isomerase A"/>
    <property type="match status" value="1"/>
</dbReference>
<dbReference type="Gene3D" id="3.30.70.260">
    <property type="match status" value="1"/>
</dbReference>
<dbReference type="Gene3D" id="3.40.50.1360">
    <property type="match status" value="1"/>
</dbReference>
<dbReference type="HAMAP" id="MF_00170">
    <property type="entry name" value="Rib_5P_isom_A"/>
    <property type="match status" value="1"/>
</dbReference>
<dbReference type="InterPro" id="IPR037171">
    <property type="entry name" value="NagB/RpiA_transferase-like"/>
</dbReference>
<dbReference type="InterPro" id="IPR020672">
    <property type="entry name" value="Ribose5P_isomerase_typA_subgr"/>
</dbReference>
<dbReference type="InterPro" id="IPR004788">
    <property type="entry name" value="Ribose5P_isomerase_type_A"/>
</dbReference>
<dbReference type="NCBIfam" id="NF001924">
    <property type="entry name" value="PRK00702.1"/>
    <property type="match status" value="1"/>
</dbReference>
<dbReference type="NCBIfam" id="TIGR00021">
    <property type="entry name" value="rpiA"/>
    <property type="match status" value="1"/>
</dbReference>
<dbReference type="PANTHER" id="PTHR11934">
    <property type="entry name" value="RIBOSE-5-PHOSPHATE ISOMERASE"/>
    <property type="match status" value="1"/>
</dbReference>
<dbReference type="PANTHER" id="PTHR11934:SF0">
    <property type="entry name" value="RIBOSE-5-PHOSPHATE ISOMERASE"/>
    <property type="match status" value="1"/>
</dbReference>
<dbReference type="Pfam" id="PF06026">
    <property type="entry name" value="Rib_5-P_isom_A"/>
    <property type="match status" value="1"/>
</dbReference>
<dbReference type="SUPFAM" id="SSF75445">
    <property type="entry name" value="D-ribose-5-phosphate isomerase (RpiA), lid domain"/>
    <property type="match status" value="1"/>
</dbReference>
<dbReference type="SUPFAM" id="SSF100950">
    <property type="entry name" value="NagB/RpiA/CoA transferase-like"/>
    <property type="match status" value="1"/>
</dbReference>
<evidence type="ECO:0000255" key="1">
    <source>
        <dbReference type="HAMAP-Rule" id="MF_00170"/>
    </source>
</evidence>
<accession>Q9JTM5</accession>
<accession>A1ISS8</accession>
<protein>
    <recommendedName>
        <fullName evidence="1">Ribose-5-phosphate isomerase A</fullName>
        <ecNumber evidence="1">5.3.1.6</ecNumber>
    </recommendedName>
    <alternativeName>
        <fullName evidence="1">Phosphoriboisomerase A</fullName>
        <shortName evidence="1">PRI</shortName>
    </alternativeName>
</protein>